<protein>
    <recommendedName>
        <fullName>Sodium-dependent dicarboxylate transporter SdcS</fullName>
    </recommendedName>
    <alternativeName>
        <fullName>Na(+)/dicarboxylate symporter</fullName>
    </alternativeName>
</protein>
<comment type="function">
    <text evidence="1">Mediates the transport of the dicarboxylates fumarate, malate, and succinate across the cytoplasmic membrane via a Na(+)-electrochemical gradient.</text>
</comment>
<comment type="subcellular location">
    <subcellularLocation>
        <location evidence="3">Cell membrane</location>
        <topology evidence="3">Multi-pass membrane protein</topology>
    </subcellularLocation>
</comment>
<comment type="similarity">
    <text evidence="3">Belongs to the SLC13A/DASS transporter (TC 2.A.47) family. NADC subfamily.</text>
</comment>
<dbReference type="EMBL" id="CP000046">
    <property type="protein sequence ID" value="AAW36949.1"/>
    <property type="molecule type" value="Genomic_DNA"/>
</dbReference>
<dbReference type="RefSeq" id="WP_000323161.1">
    <property type="nucleotide sequence ID" value="NZ_JBGOFO010000006.1"/>
</dbReference>
<dbReference type="SMR" id="Q5HEK4"/>
<dbReference type="KEGG" id="sac:SACOL1979"/>
<dbReference type="HOGENOM" id="CLU_005170_0_0_9"/>
<dbReference type="Proteomes" id="UP000000530">
    <property type="component" value="Chromosome"/>
</dbReference>
<dbReference type="GO" id="GO:0005886">
    <property type="term" value="C:plasma membrane"/>
    <property type="evidence" value="ECO:0007669"/>
    <property type="project" value="UniProtKB-SubCell"/>
</dbReference>
<dbReference type="GO" id="GO:0008514">
    <property type="term" value="F:organic anion transmembrane transporter activity"/>
    <property type="evidence" value="ECO:0007669"/>
    <property type="project" value="UniProtKB-ARBA"/>
</dbReference>
<dbReference type="GO" id="GO:0015293">
    <property type="term" value="F:symporter activity"/>
    <property type="evidence" value="ECO:0007669"/>
    <property type="project" value="UniProtKB-KW"/>
</dbReference>
<dbReference type="GO" id="GO:1905039">
    <property type="term" value="P:carboxylic acid transmembrane transport"/>
    <property type="evidence" value="ECO:0007669"/>
    <property type="project" value="UniProtKB-ARBA"/>
</dbReference>
<dbReference type="GO" id="GO:0006814">
    <property type="term" value="P:sodium ion transport"/>
    <property type="evidence" value="ECO:0007669"/>
    <property type="project" value="UniProtKB-KW"/>
</dbReference>
<dbReference type="CDD" id="cd01115">
    <property type="entry name" value="SLC13_permease"/>
    <property type="match status" value="1"/>
</dbReference>
<dbReference type="InterPro" id="IPR001898">
    <property type="entry name" value="SLC13A/DASS"/>
</dbReference>
<dbReference type="NCBIfam" id="TIGR00785">
    <property type="entry name" value="dass"/>
    <property type="match status" value="1"/>
</dbReference>
<dbReference type="PANTHER" id="PTHR10283">
    <property type="entry name" value="SOLUTE CARRIER FAMILY 13 MEMBER"/>
    <property type="match status" value="1"/>
</dbReference>
<dbReference type="PANTHER" id="PTHR10283:SF82">
    <property type="entry name" value="SOLUTE CARRIER FAMILY 13 MEMBER 2"/>
    <property type="match status" value="1"/>
</dbReference>
<dbReference type="Pfam" id="PF00939">
    <property type="entry name" value="Na_sulph_symp"/>
    <property type="match status" value="1"/>
</dbReference>
<accession>Q5HEK4</accession>
<feature type="chain" id="PRO_0000260092" description="Sodium-dependent dicarboxylate transporter SdcS">
    <location>
        <begin position="1"/>
        <end position="520"/>
    </location>
</feature>
<feature type="transmembrane region" description="Helical" evidence="2">
    <location>
        <begin position="30"/>
        <end position="50"/>
    </location>
</feature>
<feature type="transmembrane region" description="Helical" evidence="2">
    <location>
        <begin position="55"/>
        <end position="75"/>
    </location>
</feature>
<feature type="transmembrane region" description="Helical" evidence="2">
    <location>
        <begin position="77"/>
        <end position="97"/>
    </location>
</feature>
<feature type="transmembrane region" description="Helical" evidence="2">
    <location>
        <begin position="104"/>
        <end position="124"/>
    </location>
</feature>
<feature type="transmembrane region" description="Helical" evidence="2">
    <location>
        <begin position="160"/>
        <end position="180"/>
    </location>
</feature>
<feature type="transmembrane region" description="Helical" evidence="2">
    <location>
        <begin position="207"/>
        <end position="227"/>
    </location>
</feature>
<feature type="transmembrane region" description="Helical" evidence="2">
    <location>
        <begin position="242"/>
        <end position="262"/>
    </location>
</feature>
<feature type="transmembrane region" description="Helical" evidence="2">
    <location>
        <begin position="298"/>
        <end position="318"/>
    </location>
</feature>
<feature type="transmembrane region" description="Helical" evidence="2">
    <location>
        <begin position="323"/>
        <end position="343"/>
    </location>
</feature>
<feature type="transmembrane region" description="Helical" evidence="2">
    <location>
        <begin position="362"/>
        <end position="382"/>
    </location>
</feature>
<feature type="transmembrane region" description="Helical" evidence="2">
    <location>
        <begin position="399"/>
        <end position="419"/>
    </location>
</feature>
<feature type="transmembrane region" description="Helical" evidence="2">
    <location>
        <begin position="428"/>
        <end position="448"/>
    </location>
</feature>
<feature type="transmembrane region" description="Helical" evidence="2">
    <location>
        <begin position="452"/>
        <end position="472"/>
    </location>
</feature>
<feature type="transmembrane region" description="Helical" evidence="2">
    <location>
        <begin position="491"/>
        <end position="511"/>
    </location>
</feature>
<keyword id="KW-1003">Cell membrane</keyword>
<keyword id="KW-0406">Ion transport</keyword>
<keyword id="KW-0472">Membrane</keyword>
<keyword id="KW-0915">Sodium</keyword>
<keyword id="KW-0739">Sodium transport</keyword>
<keyword id="KW-0769">Symport</keyword>
<keyword id="KW-0812">Transmembrane</keyword>
<keyword id="KW-1133">Transmembrane helix</keyword>
<keyword id="KW-0813">Transport</keyword>
<evidence type="ECO:0000250" key="1"/>
<evidence type="ECO:0000255" key="2"/>
<evidence type="ECO:0000305" key="3"/>
<name>SDCS_STAAC</name>
<gene>
    <name type="primary">sdcS</name>
    <name type="ordered locus">SACOL1979</name>
</gene>
<sequence>MAYFNQHQSMISKRYLTFFSKSKKKKPFSAGQLIGLILGPLLFLLTLLFFHPQDLPWKGVYVLAITLWIATWWITEAIPIAATSLLPIVLLPLGHILTPEQVSSEYGNDIIFLFLGGFILAIAMERWNLHTRVALTIINLIGASTSKILLGFMVATGFLSMFVSNTAAVMIMIPIGLAIIKEAHDLQEANTNQTSIQKFEKSLVLAIGYAGTIGGLGTLIGTPPLIILKGQYMQHFGHEISFAKWMIVGIPTVIVLLGITWLYLRYVAFRHDLKYLPGGQTLIKQKLDELGKMKYEEKVVQTIFVLASLLWITREFLLKKWEVTSSVADGTIAIFISILLFIIPAKNTEKHRRIIDWEVAKELPWGVLILFGGGLALAKGISESGLAKWLGEQLKSLNGVSPILIVIVITIFVLFLTEVTSNTATATMILPILATLSVAVGVHPLLLMAPAAMAANCAYMLPVGTPPNAIIFGSGKISIKQMASVGFWVNLISAIIIILVVYYVMPIVLGIDINQPLPLK</sequence>
<proteinExistence type="inferred from homology"/>
<organism>
    <name type="scientific">Staphylococcus aureus (strain COL)</name>
    <dbReference type="NCBI Taxonomy" id="93062"/>
    <lineage>
        <taxon>Bacteria</taxon>
        <taxon>Bacillati</taxon>
        <taxon>Bacillota</taxon>
        <taxon>Bacilli</taxon>
        <taxon>Bacillales</taxon>
        <taxon>Staphylococcaceae</taxon>
        <taxon>Staphylococcus</taxon>
    </lineage>
</organism>
<reference key="1">
    <citation type="journal article" date="2005" name="J. Bacteriol.">
        <title>Insights on evolution of virulence and resistance from the complete genome analysis of an early methicillin-resistant Staphylococcus aureus strain and a biofilm-producing methicillin-resistant Staphylococcus epidermidis strain.</title>
        <authorList>
            <person name="Gill S.R."/>
            <person name="Fouts D.E."/>
            <person name="Archer G.L."/>
            <person name="Mongodin E.F."/>
            <person name="DeBoy R.T."/>
            <person name="Ravel J."/>
            <person name="Paulsen I.T."/>
            <person name="Kolonay J.F."/>
            <person name="Brinkac L.M."/>
            <person name="Beanan M.J."/>
            <person name="Dodson R.J."/>
            <person name="Daugherty S.C."/>
            <person name="Madupu R."/>
            <person name="Angiuoli S.V."/>
            <person name="Durkin A.S."/>
            <person name="Haft D.H."/>
            <person name="Vamathevan J.J."/>
            <person name="Khouri H."/>
            <person name="Utterback T.R."/>
            <person name="Lee C."/>
            <person name="Dimitrov G."/>
            <person name="Jiang L."/>
            <person name="Qin H."/>
            <person name="Weidman J."/>
            <person name="Tran K."/>
            <person name="Kang K.H."/>
            <person name="Hance I.R."/>
            <person name="Nelson K.E."/>
            <person name="Fraser C.M."/>
        </authorList>
    </citation>
    <scope>NUCLEOTIDE SEQUENCE [LARGE SCALE GENOMIC DNA]</scope>
    <source>
        <strain>COL</strain>
    </source>
</reference>